<evidence type="ECO:0000305" key="1"/>
<protein>
    <recommendedName>
        <fullName>Methyl-coenzyme M reductase II operon protein D</fullName>
    </recommendedName>
</protein>
<sequence>MMSETGFIDVKIFPQRLLKPETAEKLLNRIYELEGIVRVLVHGPSIPDRVYYGPARGTEVNHSDRRKITVRGEEFELRVKVGEIIVGMLPETLEEKMETIEEILDEVLPCSYKVFIGAFTKKDITISDYLKYGLKFEEKIDPRVIGMVDPSSRMKDTVVNIK</sequence>
<organism>
    <name type="scientific">Methanothermobacter thermautotrophicus (strain ATCC 29096 / DSM 1053 / JCM 10044 / NBRC 100330 / Delta H)</name>
    <name type="common">Methanobacterium thermoautotrophicum</name>
    <dbReference type="NCBI Taxonomy" id="187420"/>
    <lineage>
        <taxon>Archaea</taxon>
        <taxon>Methanobacteriati</taxon>
        <taxon>Methanobacteriota</taxon>
        <taxon>Methanomada group</taxon>
        <taxon>Methanobacteria</taxon>
        <taxon>Methanobacteriales</taxon>
        <taxon>Methanobacteriaceae</taxon>
        <taxon>Methanothermobacter</taxon>
    </lineage>
</organism>
<accession>Q50485</accession>
<accession>O27203</accession>
<name>MCRW_METTH</name>
<feature type="chain" id="PRO_0000147498" description="Methyl-coenzyme M reductase II operon protein D">
    <location>
        <begin position="1"/>
        <end position="162"/>
    </location>
</feature>
<feature type="sequence conflict" description="In Ref. 1; AAA73437." evidence="1" ref="1">
    <original>PSIPDRVYY</original>
    <variation>HQYPTVTT</variation>
    <location>
        <begin position="44"/>
        <end position="52"/>
    </location>
</feature>
<feature type="sequence conflict" description="In Ref. 1; AAA73437." evidence="1" ref="1">
    <original>TE</original>
    <variation>QR</variation>
    <location>
        <begin position="58"/>
        <end position="59"/>
    </location>
</feature>
<keyword id="KW-0484">Methanogenesis</keyword>
<keyword id="KW-1185">Reference proteome</keyword>
<gene>
    <name type="primary">mrtD</name>
    <name type="ordered locus">MTH_1131</name>
</gene>
<dbReference type="EMBL" id="U09990">
    <property type="protein sequence ID" value="AAA73437.1"/>
    <property type="molecule type" value="Genomic_DNA"/>
</dbReference>
<dbReference type="EMBL" id="AE000666">
    <property type="protein sequence ID" value="AAB85620.1"/>
    <property type="molecule type" value="Genomic_DNA"/>
</dbReference>
<dbReference type="PIR" id="F69017">
    <property type="entry name" value="F69017"/>
</dbReference>
<dbReference type="PIR" id="T45148">
    <property type="entry name" value="T45148"/>
</dbReference>
<dbReference type="SMR" id="Q50485"/>
<dbReference type="FunCoup" id="Q50485">
    <property type="interactions" value="1"/>
</dbReference>
<dbReference type="STRING" id="187420.MTH_1131"/>
<dbReference type="PaxDb" id="187420-MTH_1131"/>
<dbReference type="DNASU" id="1471539"/>
<dbReference type="EnsemblBacteria" id="AAB85620">
    <property type="protein sequence ID" value="AAB85620"/>
    <property type="gene ID" value="MTH_1131"/>
</dbReference>
<dbReference type="KEGG" id="mth:MTH_1131"/>
<dbReference type="PATRIC" id="fig|187420.15.peg.1108"/>
<dbReference type="HOGENOM" id="CLU_118415_0_0_2"/>
<dbReference type="InParanoid" id="Q50485"/>
<dbReference type="Proteomes" id="UP000005223">
    <property type="component" value="Chromosome"/>
</dbReference>
<dbReference type="GO" id="GO:0015948">
    <property type="term" value="P:methanogenesis"/>
    <property type="evidence" value="ECO:0007669"/>
    <property type="project" value="UniProtKB-KW"/>
</dbReference>
<dbReference type="InterPro" id="IPR003901">
    <property type="entry name" value="Me_CoM_Rdtase_D"/>
</dbReference>
<dbReference type="NCBIfam" id="TIGR03260">
    <property type="entry name" value="met_CoM_red_D"/>
    <property type="match status" value="1"/>
</dbReference>
<dbReference type="Pfam" id="PF02505">
    <property type="entry name" value="MCR_D"/>
    <property type="match status" value="1"/>
</dbReference>
<dbReference type="PIRSF" id="PIRSF005636">
    <property type="entry name" value="McrD"/>
    <property type="match status" value="1"/>
</dbReference>
<reference key="1">
    <citation type="journal article" date="1994" name="J. Bacteriol.">
        <title>Growth phase-dependent transcription of the genes that encode the two methyl coenzyme M reductase isoenzymes and N5-methyltetrahydromethanopterin:coenzyme M methyltransferase in Methanobacterium thermoautotrophicum delta H.</title>
        <authorList>
            <person name="Pihl T.D."/>
            <person name="Sharma S."/>
            <person name="Reeve J.N."/>
        </authorList>
    </citation>
    <scope>NUCLEOTIDE SEQUENCE [GENOMIC DNA]</scope>
    <source>
        <strain>ATCC 29096 / DSM 1053 / JCM 10044 / NBRC 100330 / Delta H</strain>
    </source>
</reference>
<reference key="2">
    <citation type="journal article" date="1997" name="J. Bacteriol.">
        <title>Complete genome sequence of Methanobacterium thermoautotrophicum deltaH: functional analysis and comparative genomics.</title>
        <authorList>
            <person name="Smith D.R."/>
            <person name="Doucette-Stamm L.A."/>
            <person name="Deloughery C."/>
            <person name="Lee H.-M."/>
            <person name="Dubois J."/>
            <person name="Aldredge T."/>
            <person name="Bashirzadeh R."/>
            <person name="Blakely D."/>
            <person name="Cook R."/>
            <person name="Gilbert K."/>
            <person name="Harrison D."/>
            <person name="Hoang L."/>
            <person name="Keagle P."/>
            <person name="Lumm W."/>
            <person name="Pothier B."/>
            <person name="Qiu D."/>
            <person name="Spadafora R."/>
            <person name="Vicare R."/>
            <person name="Wang Y."/>
            <person name="Wierzbowski J."/>
            <person name="Gibson R."/>
            <person name="Jiwani N."/>
            <person name="Caruso A."/>
            <person name="Bush D."/>
            <person name="Safer H."/>
            <person name="Patwell D."/>
            <person name="Prabhakar S."/>
            <person name="McDougall S."/>
            <person name="Shimer G."/>
            <person name="Goyal A."/>
            <person name="Pietrovski S."/>
            <person name="Church G.M."/>
            <person name="Daniels C.J."/>
            <person name="Mao J.-I."/>
            <person name="Rice P."/>
            <person name="Noelling J."/>
            <person name="Reeve J.N."/>
        </authorList>
    </citation>
    <scope>NUCLEOTIDE SEQUENCE [LARGE SCALE GENOMIC DNA]</scope>
    <source>
        <strain>ATCC 29096 / DSM 1053 / JCM 10044 / NBRC 100330 / Delta H</strain>
    </source>
</reference>
<proteinExistence type="evidence at transcript level"/>
<comment type="subunit">
    <text>MCR is composed of three subunits: alpha, beta, and gamma. The function of protein D is not known.</text>
</comment>
<comment type="developmental stage">
    <text>There are two MCR complexes in this bacteria. MCR II is expressed in the early growth phase. Late growth cells contains mostly MCR I.</text>
</comment>